<organism>
    <name type="scientific">Rattus norvegicus</name>
    <name type="common">Rat</name>
    <dbReference type="NCBI Taxonomy" id="10116"/>
    <lineage>
        <taxon>Eukaryota</taxon>
        <taxon>Metazoa</taxon>
        <taxon>Chordata</taxon>
        <taxon>Craniata</taxon>
        <taxon>Vertebrata</taxon>
        <taxon>Euteleostomi</taxon>
        <taxon>Mammalia</taxon>
        <taxon>Eutheria</taxon>
        <taxon>Euarchontoglires</taxon>
        <taxon>Glires</taxon>
        <taxon>Rodentia</taxon>
        <taxon>Myomorpha</taxon>
        <taxon>Muroidea</taxon>
        <taxon>Muridae</taxon>
        <taxon>Murinae</taxon>
        <taxon>Rattus</taxon>
    </lineage>
</organism>
<proteinExistence type="evidence at protein level"/>
<keyword id="KW-0007">Acetylation</keyword>
<keyword id="KW-0025">Alternative splicing</keyword>
<keyword id="KW-1003">Cell membrane</keyword>
<keyword id="KW-0963">Cytoplasm</keyword>
<keyword id="KW-0472">Membrane</keyword>
<keyword id="KW-0539">Nucleus</keyword>
<keyword id="KW-0597">Phosphoprotein</keyword>
<keyword id="KW-1185">Reference proteome</keyword>
<keyword id="KW-0043">Tumor suppressor</keyword>
<comment type="function">
    <text evidence="1 5 6">Negative regulator of EGFR signaling in skin morphogenesis. Acts as a negative regulator for several EGFR family members, including ERBB2, ERBB3 and ERBB4. Inhibits EGFR catalytic activity by interfering with its dimerization. Inhibits autophosphorylation of EGFR, ERBB2 and ERBB4. Important for normal keratinocyte proliferation and differentiation. Plays a role in modulating the response to steroid hormones in the uterus. Required for normal response to progesterone in the uterus and for fertility. Mediates epithelial estrogen responses in the uterus by regulating ESR1 levels and activation. Important for regulation of endometrium cell proliferation. Important for normal prenatal and perinatal lung development (By similarity).</text>
</comment>
<comment type="subunit">
    <text evidence="5 6">Interacts with EGFR and ERBB2.</text>
</comment>
<comment type="subcellular location">
    <subcellularLocation>
        <location evidence="1">Cytoplasm</location>
    </subcellularLocation>
    <subcellularLocation>
        <location evidence="1">Cell membrane</location>
        <topology evidence="1">Peripheral membrane protein</topology>
        <orientation evidence="1">Cytoplasmic side</orientation>
    </subcellularLocation>
    <subcellularLocation>
        <location evidence="1">Nucleus</location>
    </subcellularLocation>
    <text evidence="1">Associated with the plasma membrane of basal skin keratinocytes. Translocates into the nucleus of differentiating suprabasal keratinocytes (By similarity).</text>
</comment>
<comment type="alternative products">
    <event type="alternative splicing"/>
    <isoform>
        <id>P05432-1</id>
        <name>1</name>
        <sequence type="displayed"/>
    </isoform>
    <isoform>
        <id>P05432-2</id>
        <name>2</name>
        <sequence type="described" ref="VSP_011893"/>
    </isoform>
</comment>
<comment type="induction">
    <text>By cAMP, glucocorticoids, phorbol esters and insulin.</text>
</comment>
<comment type="domain">
    <text evidence="1">The EGFR-binding region prevents binding of a cyclin-like activator to the EGFR kinase domain, and thereby keeps EGFR in an inactive conformation. Also maintains EGFR in an inactive conformation by preventing formation of an asymmetric homodimer (By similarity).</text>
</comment>
<comment type="similarity">
    <text evidence="8">Belongs to the MIG6 family.</text>
</comment>
<sequence>MSTAGVAAQDIRVPLKTGFLHNGQALGNMKTCWGSRNEFEKNFLNIDPITMAYNLNSPAPEHLTTLGCASPSAPGSGHFFAERGPSPKSSLPPLVIPPSESSGQREEDQVLCGFKKLSVNGVCASTPPLTPIQSCSSPFPCAAPCDRSSRPLPPLPISEDPSLDEADCEVEFLTSADTDFLLEDCVPSDFKYDVPGRRSFRGCGQINYAYFDSPTVSVADLSCASDQNRVVPDPNPPPPQSHRRLRRSHSGPAGSFNKPAIRISSCTHRASPSSDEDKPEIPPRVPIPPRPAKPDYRRWSAEVTSNTYSDEDRPPKVPPREPLSRSNSRTPSPKSLPSYLNGVMPPTQSFAPDPKYVSSKALQRQSSEGSAKAPCILPIIENGKKVSSTHYYLLPERPPYLDKYEKYFREAEEANPSTQIQPLPAACGMVSATDKLASRMKMDVGGHGKRKHLSYVVSP</sequence>
<protein>
    <recommendedName>
        <fullName>ERBB receptor feedback inhibitor 1</fullName>
    </recommendedName>
    <alternativeName>
        <fullName>Gene 33 polypeptide</fullName>
    </alternativeName>
    <alternativeName>
        <fullName>Mitogen-inducible gene 6 protein homolog</fullName>
        <shortName>MIG-6</shortName>
    </alternativeName>
    <alternativeName>
        <fullName>Receptor-associated late transducer</fullName>
        <shortName>RALT</shortName>
    </alternativeName>
</protein>
<dbReference type="EMBL" id="M23572">
    <property type="protein sequence ID" value="AAB08828.1"/>
    <property type="molecule type" value="Genomic_DNA"/>
</dbReference>
<dbReference type="EMBL" id="M23570">
    <property type="protein sequence ID" value="AAB08828.1"/>
    <property type="status" value="JOINED"/>
    <property type="molecule type" value="Genomic_DNA"/>
</dbReference>
<dbReference type="EMBL" id="M23571">
    <property type="protein sequence ID" value="AAB08828.1"/>
    <property type="status" value="JOINED"/>
    <property type="molecule type" value="Genomic_DNA"/>
</dbReference>
<dbReference type="EMBL" id="X07266">
    <property type="protein sequence ID" value="CAA30252.1"/>
    <property type="molecule type" value="mRNA"/>
</dbReference>
<dbReference type="EMBL" id="BC083845">
    <property type="protein sequence ID" value="AAH83845.1"/>
    <property type="molecule type" value="mRNA"/>
</dbReference>
<dbReference type="PIR" id="S03116">
    <property type="entry name" value="S03116"/>
</dbReference>
<dbReference type="RefSeq" id="NP_001014093.1">
    <molecule id="P05432-1"/>
    <property type="nucleotide sequence ID" value="NM_001014071.1"/>
</dbReference>
<dbReference type="RefSeq" id="XP_008762482.1">
    <property type="nucleotide sequence ID" value="XM_008764260.2"/>
</dbReference>
<dbReference type="RefSeq" id="XP_008762483.1">
    <property type="nucleotide sequence ID" value="XM_008764261.2"/>
</dbReference>
<dbReference type="RefSeq" id="XP_008762484.1">
    <molecule id="P05432-2"/>
    <property type="nucleotide sequence ID" value="XM_008764262.4"/>
</dbReference>
<dbReference type="SMR" id="P05432"/>
<dbReference type="BioGRID" id="260526">
    <property type="interactions" value="5"/>
</dbReference>
<dbReference type="FunCoup" id="P05432">
    <property type="interactions" value="491"/>
</dbReference>
<dbReference type="STRING" id="10116.ENSRNOP00000072811"/>
<dbReference type="iPTMnet" id="P05432"/>
<dbReference type="PhosphoSitePlus" id="P05432"/>
<dbReference type="GeneID" id="313729"/>
<dbReference type="KEGG" id="rno:313729"/>
<dbReference type="UCSC" id="RGD:1307599">
    <molecule id="P05432-1"/>
    <property type="organism name" value="rat"/>
</dbReference>
<dbReference type="AGR" id="RGD:1307599"/>
<dbReference type="CTD" id="54206"/>
<dbReference type="RGD" id="1307599">
    <property type="gene designation" value="Errfi1"/>
</dbReference>
<dbReference type="VEuPathDB" id="HostDB:ENSRNOG00000058186"/>
<dbReference type="eggNOG" id="ENOG502QPQW">
    <property type="taxonomic scope" value="Eukaryota"/>
</dbReference>
<dbReference type="HOGENOM" id="CLU_604032_0_0_1"/>
<dbReference type="InParanoid" id="P05432"/>
<dbReference type="OrthoDB" id="70763at9989"/>
<dbReference type="PhylomeDB" id="P05432"/>
<dbReference type="TreeFam" id="TF335720"/>
<dbReference type="PRO" id="PR:P05432"/>
<dbReference type="Proteomes" id="UP000002494">
    <property type="component" value="Chromosome 5"/>
</dbReference>
<dbReference type="Bgee" id="ENSRNOG00000058186">
    <property type="expression patterns" value="Expressed in liver and 20 other cell types or tissues"/>
</dbReference>
<dbReference type="GO" id="GO:0005737">
    <property type="term" value="C:cytoplasm"/>
    <property type="evidence" value="ECO:0000250"/>
    <property type="project" value="UniProtKB"/>
</dbReference>
<dbReference type="GO" id="GO:0005829">
    <property type="term" value="C:cytosol"/>
    <property type="evidence" value="ECO:0007669"/>
    <property type="project" value="Ensembl"/>
</dbReference>
<dbReference type="GO" id="GO:0005634">
    <property type="term" value="C:nucleus"/>
    <property type="evidence" value="ECO:0007669"/>
    <property type="project" value="UniProtKB-SubCell"/>
</dbReference>
<dbReference type="GO" id="GO:0005886">
    <property type="term" value="C:plasma membrane"/>
    <property type="evidence" value="ECO:0000250"/>
    <property type="project" value="UniProtKB"/>
</dbReference>
<dbReference type="GO" id="GO:0019900">
    <property type="term" value="F:kinase binding"/>
    <property type="evidence" value="ECO:0000353"/>
    <property type="project" value="UniProtKB"/>
</dbReference>
<dbReference type="GO" id="GO:0019901">
    <property type="term" value="F:protein kinase binding"/>
    <property type="evidence" value="ECO:0000266"/>
    <property type="project" value="RGD"/>
</dbReference>
<dbReference type="GO" id="GO:0017124">
    <property type="term" value="F:SH3 domain binding"/>
    <property type="evidence" value="ECO:0000314"/>
    <property type="project" value="RGD"/>
</dbReference>
<dbReference type="GO" id="GO:0031267">
    <property type="term" value="F:small GTPase binding"/>
    <property type="evidence" value="ECO:0000353"/>
    <property type="project" value="RGD"/>
</dbReference>
<dbReference type="GO" id="GO:0006915">
    <property type="term" value="P:apoptotic process"/>
    <property type="evidence" value="ECO:0000266"/>
    <property type="project" value="RGD"/>
</dbReference>
<dbReference type="GO" id="GO:0006699">
    <property type="term" value="P:bile acid biosynthetic process"/>
    <property type="evidence" value="ECO:0000266"/>
    <property type="project" value="RGD"/>
</dbReference>
<dbReference type="GO" id="GO:0051216">
    <property type="term" value="P:cartilage development"/>
    <property type="evidence" value="ECO:0000266"/>
    <property type="project" value="RGD"/>
</dbReference>
<dbReference type="GO" id="GO:0016477">
    <property type="term" value="P:cell migration"/>
    <property type="evidence" value="ECO:0000266"/>
    <property type="project" value="RGD"/>
</dbReference>
<dbReference type="GO" id="GO:0071474">
    <property type="term" value="P:cellular hyperosmotic response"/>
    <property type="evidence" value="ECO:0000270"/>
    <property type="project" value="RGD"/>
</dbReference>
<dbReference type="GO" id="GO:0071549">
    <property type="term" value="P:cellular response to dexamethasone stimulus"/>
    <property type="evidence" value="ECO:0000270"/>
    <property type="project" value="RGD"/>
</dbReference>
<dbReference type="GO" id="GO:0071364">
    <property type="term" value="P:cellular response to epidermal growth factor stimulus"/>
    <property type="evidence" value="ECO:0000270"/>
    <property type="project" value="RGD"/>
</dbReference>
<dbReference type="GO" id="GO:0032869">
    <property type="term" value="P:cellular response to insulin stimulus"/>
    <property type="evidence" value="ECO:0000270"/>
    <property type="project" value="RGD"/>
</dbReference>
<dbReference type="GO" id="GO:0036120">
    <property type="term" value="P:cellular response to platelet-derived growth factor stimulus"/>
    <property type="evidence" value="ECO:0000270"/>
    <property type="project" value="RGD"/>
</dbReference>
<dbReference type="GO" id="GO:0042632">
    <property type="term" value="P:cholesterol homeostasis"/>
    <property type="evidence" value="ECO:0000266"/>
    <property type="project" value="RGD"/>
</dbReference>
<dbReference type="GO" id="GO:0008203">
    <property type="term" value="P:cholesterol metabolic process"/>
    <property type="evidence" value="ECO:0000266"/>
    <property type="project" value="RGD"/>
</dbReference>
<dbReference type="GO" id="GO:0035988">
    <property type="term" value="P:chondrocyte proliferation"/>
    <property type="evidence" value="ECO:0000266"/>
    <property type="project" value="RGD"/>
</dbReference>
<dbReference type="GO" id="GO:0007566">
    <property type="term" value="P:embryo implantation"/>
    <property type="evidence" value="ECO:0000266"/>
    <property type="project" value="RGD"/>
</dbReference>
<dbReference type="GO" id="GO:0007173">
    <property type="term" value="P:epidermal growth factor receptor signaling pathway"/>
    <property type="evidence" value="ECO:0000266"/>
    <property type="project" value="RGD"/>
</dbReference>
<dbReference type="GO" id="GO:0050673">
    <property type="term" value="P:epithelial cell proliferation"/>
    <property type="evidence" value="ECO:0000266"/>
    <property type="project" value="RGD"/>
</dbReference>
<dbReference type="GO" id="GO:0060429">
    <property type="term" value="P:epithelium development"/>
    <property type="evidence" value="ECO:0000266"/>
    <property type="project" value="RGD"/>
</dbReference>
<dbReference type="GO" id="GO:0060613">
    <property type="term" value="P:fat pad development"/>
    <property type="evidence" value="ECO:0000266"/>
    <property type="project" value="RGD"/>
</dbReference>
<dbReference type="GO" id="GO:0010467">
    <property type="term" value="P:gene expression"/>
    <property type="evidence" value="ECO:0000266"/>
    <property type="project" value="RGD"/>
</dbReference>
<dbReference type="GO" id="GO:0006006">
    <property type="term" value="P:glucose metabolic process"/>
    <property type="evidence" value="ECO:0000266"/>
    <property type="project" value="RGD"/>
</dbReference>
<dbReference type="GO" id="GO:0036022">
    <property type="term" value="P:limb joint morphogenesis"/>
    <property type="evidence" value="ECO:0000266"/>
    <property type="project" value="RGD"/>
</dbReference>
<dbReference type="GO" id="GO:0006629">
    <property type="term" value="P:lipid metabolic process"/>
    <property type="evidence" value="ECO:0000266"/>
    <property type="project" value="RGD"/>
</dbReference>
<dbReference type="GO" id="GO:0001889">
    <property type="term" value="P:liver development"/>
    <property type="evidence" value="ECO:0000266"/>
    <property type="project" value="RGD"/>
</dbReference>
<dbReference type="GO" id="GO:0048286">
    <property type="term" value="P:lung alveolus development"/>
    <property type="evidence" value="ECO:0000250"/>
    <property type="project" value="UniProtKB"/>
</dbReference>
<dbReference type="GO" id="GO:0060428">
    <property type="term" value="P:lung epithelium development"/>
    <property type="evidence" value="ECO:0000250"/>
    <property type="project" value="UniProtKB"/>
</dbReference>
<dbReference type="GO" id="GO:0060426">
    <property type="term" value="P:lung vasculature development"/>
    <property type="evidence" value="ECO:0000250"/>
    <property type="project" value="UniProtKB"/>
</dbReference>
<dbReference type="GO" id="GO:1903243">
    <property type="term" value="P:negative regulation of cardiac muscle hypertrophy in response to stress"/>
    <property type="evidence" value="ECO:0000314"/>
    <property type="project" value="RGD"/>
</dbReference>
<dbReference type="GO" id="GO:0032966">
    <property type="term" value="P:negative regulation of collagen biosynthetic process"/>
    <property type="evidence" value="ECO:0000315"/>
    <property type="project" value="RGD"/>
</dbReference>
<dbReference type="GO" id="GO:0042059">
    <property type="term" value="P:negative regulation of epidermal growth factor receptor signaling pathway"/>
    <property type="evidence" value="ECO:0000315"/>
    <property type="project" value="RGD"/>
</dbReference>
<dbReference type="GO" id="GO:0007175">
    <property type="term" value="P:negative regulation of epidermal growth factor-activated receptor activity"/>
    <property type="evidence" value="ECO:0000314"/>
    <property type="project" value="UniProtKB"/>
</dbReference>
<dbReference type="GO" id="GO:0070373">
    <property type="term" value="P:negative regulation of ERK1 and ERK2 cascade"/>
    <property type="evidence" value="ECO:0000314"/>
    <property type="project" value="RGD"/>
</dbReference>
<dbReference type="GO" id="GO:0032691">
    <property type="term" value="P:negative regulation of interleukin-1 beta production"/>
    <property type="evidence" value="ECO:0000315"/>
    <property type="project" value="RGD"/>
</dbReference>
<dbReference type="GO" id="GO:0050732">
    <property type="term" value="P:negative regulation of peptidyl-tyrosine phosphorylation"/>
    <property type="evidence" value="ECO:0000314"/>
    <property type="project" value="UniProtKB"/>
</dbReference>
<dbReference type="GO" id="GO:0031953">
    <property type="term" value="P:negative regulation of protein autophosphorylation"/>
    <property type="evidence" value="ECO:0000250"/>
    <property type="project" value="UniProtKB"/>
</dbReference>
<dbReference type="GO" id="GO:0032720">
    <property type="term" value="P:negative regulation of tumor necrosis factor production"/>
    <property type="evidence" value="ECO:0000315"/>
    <property type="project" value="RGD"/>
</dbReference>
<dbReference type="GO" id="GO:0043491">
    <property type="term" value="P:phosphatidylinositol 3-kinase/protein kinase B signal transduction"/>
    <property type="evidence" value="ECO:0000266"/>
    <property type="project" value="RGD"/>
</dbReference>
<dbReference type="GO" id="GO:0050847">
    <property type="term" value="P:progesterone receptor signaling pathway"/>
    <property type="evidence" value="ECO:0000266"/>
    <property type="project" value="RGD"/>
</dbReference>
<dbReference type="GO" id="GO:0072659">
    <property type="term" value="P:protein localization to plasma membrane"/>
    <property type="evidence" value="ECO:0000266"/>
    <property type="project" value="RGD"/>
</dbReference>
<dbReference type="GO" id="GO:0045616">
    <property type="term" value="P:regulation of keratinocyte differentiation"/>
    <property type="evidence" value="ECO:0000250"/>
    <property type="project" value="UniProtKB"/>
</dbReference>
<dbReference type="GO" id="GO:0061469">
    <property type="term" value="P:regulation of type B pancreatic cell proliferation"/>
    <property type="evidence" value="ECO:0000315"/>
    <property type="project" value="RGD"/>
</dbReference>
<dbReference type="GO" id="GO:1904565">
    <property type="term" value="P:response to 1-oleoyl-sn-glycerol 3-phosphate"/>
    <property type="evidence" value="ECO:0000266"/>
    <property type="project" value="RGD"/>
</dbReference>
<dbReference type="GO" id="GO:0032355">
    <property type="term" value="P:response to estradiol"/>
    <property type="evidence" value="ECO:0000266"/>
    <property type="project" value="RGD"/>
</dbReference>
<dbReference type="GO" id="GO:0032868">
    <property type="term" value="P:response to insulin"/>
    <property type="evidence" value="ECO:0000266"/>
    <property type="project" value="RGD"/>
</dbReference>
<dbReference type="GO" id="GO:0032570">
    <property type="term" value="P:response to progesterone"/>
    <property type="evidence" value="ECO:0000266"/>
    <property type="project" value="RGD"/>
</dbReference>
<dbReference type="GO" id="GO:0048545">
    <property type="term" value="P:response to steroid hormone"/>
    <property type="evidence" value="ECO:0000266"/>
    <property type="project" value="RGD"/>
</dbReference>
<dbReference type="GO" id="GO:0009410">
    <property type="term" value="P:response to xenobiotic stimulus"/>
    <property type="evidence" value="ECO:0000266"/>
    <property type="project" value="RGD"/>
</dbReference>
<dbReference type="GO" id="GO:0001501">
    <property type="term" value="P:skeletal system development"/>
    <property type="evidence" value="ECO:0000266"/>
    <property type="project" value="RGD"/>
</dbReference>
<dbReference type="GO" id="GO:0043588">
    <property type="term" value="P:skin development"/>
    <property type="evidence" value="ECO:0000266"/>
    <property type="project" value="RGD"/>
</dbReference>
<dbReference type="GO" id="GO:0043589">
    <property type="term" value="P:skin morphogenesis"/>
    <property type="evidence" value="ECO:0000250"/>
    <property type="project" value="UniProtKB"/>
</dbReference>
<dbReference type="GO" id="GO:0001894">
    <property type="term" value="P:tissue homeostasis"/>
    <property type="evidence" value="ECO:0000266"/>
    <property type="project" value="RGD"/>
</dbReference>
<dbReference type="GO" id="GO:0035847">
    <property type="term" value="P:uterine epithelium development"/>
    <property type="evidence" value="ECO:0000266"/>
    <property type="project" value="RGD"/>
</dbReference>
<dbReference type="GO" id="GO:0060065">
    <property type="term" value="P:uterus development"/>
    <property type="evidence" value="ECO:0000266"/>
    <property type="project" value="RGD"/>
</dbReference>
<dbReference type="InterPro" id="IPR015116">
    <property type="entry name" value="Cdc42-bd-like"/>
</dbReference>
<dbReference type="InterPro" id="IPR052112">
    <property type="entry name" value="EGFR_SigReg_Kinase"/>
</dbReference>
<dbReference type="InterPro" id="IPR021619">
    <property type="entry name" value="Mig-6"/>
</dbReference>
<dbReference type="PANTHER" id="PTHR14254:SF5">
    <property type="entry name" value="ERBB RECEPTOR FEEDBACK INHIBITOR 1"/>
    <property type="match status" value="1"/>
</dbReference>
<dbReference type="PANTHER" id="PTHR14254">
    <property type="entry name" value="GENE 33 POLYPEPTIDE"/>
    <property type="match status" value="1"/>
</dbReference>
<dbReference type="Pfam" id="PF09027">
    <property type="entry name" value="GTPase_binding"/>
    <property type="match status" value="1"/>
</dbReference>
<dbReference type="Pfam" id="PF11555">
    <property type="entry name" value="Inhibitor_Mig-6"/>
    <property type="match status" value="1"/>
</dbReference>
<accession>P05432</accession>
<name>ERRFI_RAT</name>
<gene>
    <name type="primary">Errfi1</name>
    <name type="synonym">33</name>
    <name type="synonym">Mig6</name>
</gene>
<evidence type="ECO:0000250" key="1"/>
<evidence type="ECO:0000250" key="2">
    <source>
        <dbReference type="UniProtKB" id="Q99JZ7"/>
    </source>
</evidence>
<evidence type="ECO:0000250" key="3">
    <source>
        <dbReference type="UniProtKB" id="Q9UJM3"/>
    </source>
</evidence>
<evidence type="ECO:0000256" key="4">
    <source>
        <dbReference type="SAM" id="MobiDB-lite"/>
    </source>
</evidence>
<evidence type="ECO:0000269" key="5">
    <source>
    </source>
</evidence>
<evidence type="ECO:0000269" key="6">
    <source>
    </source>
</evidence>
<evidence type="ECO:0000303" key="7">
    <source>
    </source>
</evidence>
<evidence type="ECO:0000305" key="8"/>
<evidence type="ECO:0007744" key="9">
    <source>
    </source>
</evidence>
<reference key="1">
    <citation type="journal article" date="1988" name="Gene">
        <title>Structure of a multihormonally regulated rat gene.</title>
        <authorList>
            <person name="Tindal M.H."/>
            <person name="Lee K.-L."/>
            <person name="Isham K.R."/>
            <person name="Cadilla C."/>
            <person name="Kenney F.T."/>
        </authorList>
    </citation>
    <scope>NUCLEOTIDE SEQUENCE [GENOMIC DNA]</scope>
    <source>
        <strain>Sprague-Dawley</strain>
        <tissue>Liver</tissue>
    </source>
</reference>
<reference key="2">
    <citation type="journal article" date="1989" name="Nucleic Acids Res.">
        <title>Rat gene 33: analysis of its structure, messenger RNA and basal promoter activity.</title>
        <authorList>
            <person name="Chrapkiewicz N.B."/>
            <person name="Davis C.M."/>
            <person name="Chu D.T.W."/>
            <person name="Granner D.K."/>
        </authorList>
    </citation>
    <scope>NUCLEOTIDE SEQUENCE [MRNA] (ISOFORM 1)</scope>
    <source>
        <strain>Sprague-Dawley</strain>
    </source>
</reference>
<reference key="3">
    <citation type="journal article" date="1989" name="Arch. Biochem. Biophys.">
        <title>Molecular cloning and analysis of full-length cDNAs cognate to a rat gene under multihormonal control.</title>
        <authorList>
            <person name="Lee K.-L."/>
            <person name="Makkinje A."/>
            <person name="Ch'Ang L.-Y."/>
            <person name="Kenney F.T."/>
        </authorList>
    </citation>
    <scope>NUCLEOTIDE SEQUENCE [MRNA] (ISOFORMS 1 AND 2)</scope>
    <source>
        <tissue>Liver</tissue>
    </source>
</reference>
<reference key="4">
    <citation type="journal article" date="2004" name="Genome Res.">
        <title>The status, quality, and expansion of the NIH full-length cDNA project: the Mammalian Gene Collection (MGC).</title>
        <authorList>
            <consortium name="The MGC Project Team"/>
        </authorList>
    </citation>
    <scope>NUCLEOTIDE SEQUENCE [LARGE SCALE MRNA] (ISOFORM 1)</scope>
    <source>
        <tissue>Lung</tissue>
    </source>
</reference>
<reference key="5">
    <citation type="journal article" date="2000" name="Mol. Cell. Biol.">
        <title>Inhibition of ErbB-2 mitogenic and transforming activity by RALT, a mitogen-induced signal transducer which binds to the ErbB-2 kinase domain.</title>
        <authorList>
            <person name="Fiorentino L."/>
            <person name="Pertica C."/>
            <person name="Fiorini M."/>
            <person name="Talora C."/>
            <person name="Crescenzi M."/>
            <person name="Castellani L."/>
            <person name="Alema S."/>
            <person name="Benedetti P."/>
            <person name="Segatto O."/>
        </authorList>
    </citation>
    <scope>FUNCTION</scope>
    <scope>PHOSPHORYLATION</scope>
    <scope>SUBCELLULAR LOCATION</scope>
    <scope>INTERACTION WITH ERBB2</scope>
</reference>
<reference key="6">
    <citation type="journal article" date="2007" name="Oncogene">
        <title>The evolutionarily conserved EBR module of RALT/MIG6 mediates suppression of the EGFR catalytic activity.</title>
        <authorList>
            <person name="Anastasi S."/>
            <person name="Baietti M.F."/>
            <person name="Frosi Y."/>
            <person name="Alema S."/>
            <person name="Segatto O."/>
        </authorList>
    </citation>
    <scope>FUNCTION</scope>
    <scope>INTERACTION WITH EGFR</scope>
</reference>
<reference key="7">
    <citation type="journal article" date="2012" name="Nat. Commun.">
        <title>Quantitative maps of protein phosphorylation sites across 14 different rat organs and tissues.</title>
        <authorList>
            <person name="Lundby A."/>
            <person name="Secher A."/>
            <person name="Lage K."/>
            <person name="Nordsborg N.B."/>
            <person name="Dmytriyev A."/>
            <person name="Lundby C."/>
            <person name="Olsen J.V."/>
        </authorList>
    </citation>
    <scope>PHOSPHORYLATION [LARGE SCALE ANALYSIS] AT SER-250</scope>
    <scope>IDENTIFICATION BY MASS SPECTROMETRY [LARGE SCALE ANALYSIS]</scope>
</reference>
<feature type="initiator methionine" description="Removed" evidence="3">
    <location>
        <position position="1"/>
    </location>
</feature>
<feature type="chain" id="PRO_0000096489" description="ERBB receptor feedback inhibitor 1">
    <location>
        <begin position="2"/>
        <end position="459"/>
    </location>
</feature>
<feature type="region of interest" description="Disordered" evidence="4">
    <location>
        <begin position="227"/>
        <end position="352"/>
    </location>
</feature>
<feature type="region of interest" description="Interaction with EGFR and ERBB2 and regulation of EGFR activation" evidence="1">
    <location>
        <begin position="332"/>
        <end position="361"/>
    </location>
</feature>
<feature type="compositionally biased region" description="Polar residues" evidence="4">
    <location>
        <begin position="264"/>
        <end position="273"/>
    </location>
</feature>
<feature type="compositionally biased region" description="Pro residues" evidence="4">
    <location>
        <begin position="282"/>
        <end position="291"/>
    </location>
</feature>
<feature type="compositionally biased region" description="Basic and acidic residues" evidence="4">
    <location>
        <begin position="310"/>
        <end position="323"/>
    </location>
</feature>
<feature type="compositionally biased region" description="Polar residues" evidence="4">
    <location>
        <begin position="324"/>
        <end position="335"/>
    </location>
</feature>
<feature type="modified residue" description="N-acetylserine" evidence="3">
    <location>
        <position position="2"/>
    </location>
</feature>
<feature type="modified residue" description="Phosphothreonine" evidence="2">
    <location>
        <position position="126"/>
    </location>
</feature>
<feature type="modified residue" description="Phosphothreonine" evidence="2">
    <location>
        <position position="130"/>
    </location>
</feature>
<feature type="modified residue" description="Phosphoserine" evidence="9">
    <location>
        <position position="250"/>
    </location>
</feature>
<feature type="modified residue" description="Phosphoserine" evidence="3">
    <location>
        <position position="271"/>
    </location>
</feature>
<feature type="modified residue" description="Phosphoserine" evidence="2">
    <location>
        <position position="300"/>
    </location>
</feature>
<feature type="modified residue" description="Phosphoserine" evidence="3">
    <location>
        <position position="458"/>
    </location>
</feature>
<feature type="splice variant" id="VSP_011893" description="In isoform 2." evidence="7">
    <location>
        <begin position="67"/>
        <end position="142"/>
    </location>
</feature>
<feature type="sequence conflict" description="In Ref. 3; no nucleotide entry." evidence="8" ref="3">
    <original>G</original>
    <variation>K</variation>
    <location>
        <position position="18"/>
    </location>
</feature>
<feature type="sequence conflict" description="In Ref. 3; no nucleotide entry." evidence="8" ref="3">
    <original>Y</original>
    <variation>T</variation>
    <location>
        <position position="192"/>
    </location>
</feature>
<feature type="sequence conflict" description="In Ref. 3; no nucleotide entry." evidence="8" ref="3">
    <original>E</original>
    <variation>L</variation>
    <location>
        <position position="302"/>
    </location>
</feature>
<feature type="sequence conflict" description="In Ref. 3; no nucleotide entry." evidence="8" ref="3">
    <original>E</original>
    <variation>L</variation>
    <location>
        <position position="311"/>
    </location>
</feature>
<feature type="sequence conflict" description="In Ref. 3; no nucleotide entry." evidence="8" ref="3">
    <original>E</original>
    <variation>L</variation>
    <location>
        <position position="396"/>
    </location>
</feature>
<feature type="sequence conflict" description="In Ref. 3; no nucleotide entry." evidence="8" ref="3">
    <original>E</original>
    <variation>L</variation>
    <location>
        <position position="410"/>
    </location>
</feature>